<feature type="chain" id="PRO_0000403650" description="Protein SGT1 homolog">
    <location>
        <begin position="1"/>
        <end position="367"/>
    </location>
</feature>
<feature type="repeat" description="TPR 1">
    <location>
        <begin position="6"/>
        <end position="39"/>
    </location>
</feature>
<feature type="repeat" description="TPR 2">
    <location>
        <begin position="40"/>
        <end position="73"/>
    </location>
</feature>
<feature type="repeat" description="TPR 3">
    <location>
        <begin position="75"/>
        <end position="107"/>
    </location>
</feature>
<feature type="domain" description="CS" evidence="3">
    <location>
        <begin position="165"/>
        <end position="254"/>
    </location>
</feature>
<feature type="domain" description="SGS" evidence="2">
    <location>
        <begin position="277"/>
        <end position="367"/>
    </location>
</feature>
<feature type="region of interest" description="Disordered" evidence="4">
    <location>
        <begin position="261"/>
        <end position="289"/>
    </location>
</feature>
<feature type="region of interest" description="Disordered" evidence="4">
    <location>
        <begin position="347"/>
        <end position="367"/>
    </location>
</feature>
<feature type="sequence conflict" description="In Ref. 1; AAF18438." evidence="9" ref="1">
    <original>S</original>
    <variation>T</variation>
    <location>
        <position position="126"/>
    </location>
</feature>
<proteinExistence type="evidence at protein level"/>
<sequence>MATAAASDLESKAKAAFVDDDFELAAELYTQAIEASPATAELYADRAQAHIKLGNYTEAVADANKAIELDPSMHKAYLRKGAACIRLEEYQTAKAALELGYSFASGDSRFTRLMKECDERIAEELSEVPVKKAEDGAAAPSVASFVEEKDDAANMDNTPPMVEVKPKYRHDFYNSATEVVLTIFAKGVPAENVVVDFGEQMLSVSIEVPGEEPYHFQPRLFSKIIPEKSRYQVLSTKVEIRLAKAEQITWTSLDYDKKPKAVPQKIIPPAESAQRPSYPSSKSKKDWDKLEAEVKKEEKEEKLEGDAALNKFFRDIYSDADEDMRRAMMKSFVESNGTVLSTNWKDVGSKKVEGSPPDGMELKKWEY</sequence>
<accession>Q0JL44</accession>
<accession>Q9SE32</accession>
<reference key="1">
    <citation type="journal article" date="1999" name="Cell">
        <title>A novel class of eukaryotic zinc-binding proteins is required for disease resistance signaling in barley and development in C. elegans.</title>
        <authorList>
            <person name="Shirasu K."/>
            <person name="Lahaye T."/>
            <person name="Tan M.-W."/>
            <person name="Zhou F."/>
            <person name="Azevedo C."/>
            <person name="Schulze-Lefert P."/>
        </authorList>
    </citation>
    <scope>NUCLEOTIDE SEQUENCE [MRNA]</scope>
</reference>
<reference key="2">
    <citation type="journal article" date="2005" name="Nature">
        <title>The map-based sequence of the rice genome.</title>
        <authorList>
            <consortium name="International rice genome sequencing project (IRGSP)"/>
        </authorList>
    </citation>
    <scope>NUCLEOTIDE SEQUENCE [LARGE SCALE GENOMIC DNA]</scope>
    <source>
        <strain>cv. Nipponbare</strain>
    </source>
</reference>
<reference key="3">
    <citation type="journal article" date="2008" name="Nucleic Acids Res.">
        <title>The rice annotation project database (RAP-DB): 2008 update.</title>
        <authorList>
            <consortium name="The rice annotation project (RAP)"/>
        </authorList>
    </citation>
    <scope>GENOME REANNOTATION</scope>
    <source>
        <strain>cv. Nipponbare</strain>
    </source>
</reference>
<reference key="4">
    <citation type="journal article" date="2013" name="Rice">
        <title>Improvement of the Oryza sativa Nipponbare reference genome using next generation sequence and optical map data.</title>
        <authorList>
            <person name="Kawahara Y."/>
            <person name="de la Bastide M."/>
            <person name="Hamilton J.P."/>
            <person name="Kanamori H."/>
            <person name="McCombie W.R."/>
            <person name="Ouyang S."/>
            <person name="Schwartz D.C."/>
            <person name="Tanaka T."/>
            <person name="Wu J."/>
            <person name="Zhou S."/>
            <person name="Childs K.L."/>
            <person name="Davidson R.M."/>
            <person name="Lin H."/>
            <person name="Quesada-Ocampo L."/>
            <person name="Vaillancourt B."/>
            <person name="Sakai H."/>
            <person name="Lee S.S."/>
            <person name="Kim J."/>
            <person name="Numa H."/>
            <person name="Itoh T."/>
            <person name="Buell C.R."/>
            <person name="Matsumoto T."/>
        </authorList>
    </citation>
    <scope>GENOME REANNOTATION</scope>
    <source>
        <strain>cv. Nipponbare</strain>
    </source>
</reference>
<reference key="5">
    <citation type="journal article" date="2005" name="PLoS Biol.">
        <title>The genomes of Oryza sativa: a history of duplications.</title>
        <authorList>
            <person name="Yu J."/>
            <person name="Wang J."/>
            <person name="Lin W."/>
            <person name="Li S."/>
            <person name="Li H."/>
            <person name="Zhou J."/>
            <person name="Ni P."/>
            <person name="Dong W."/>
            <person name="Hu S."/>
            <person name="Zeng C."/>
            <person name="Zhang J."/>
            <person name="Zhang Y."/>
            <person name="Li R."/>
            <person name="Xu Z."/>
            <person name="Li S."/>
            <person name="Li X."/>
            <person name="Zheng H."/>
            <person name="Cong L."/>
            <person name="Lin L."/>
            <person name="Yin J."/>
            <person name="Geng J."/>
            <person name="Li G."/>
            <person name="Shi J."/>
            <person name="Liu J."/>
            <person name="Lv H."/>
            <person name="Li J."/>
            <person name="Wang J."/>
            <person name="Deng Y."/>
            <person name="Ran L."/>
            <person name="Shi X."/>
            <person name="Wang X."/>
            <person name="Wu Q."/>
            <person name="Li C."/>
            <person name="Ren X."/>
            <person name="Wang J."/>
            <person name="Wang X."/>
            <person name="Li D."/>
            <person name="Liu D."/>
            <person name="Zhang X."/>
            <person name="Ji Z."/>
            <person name="Zhao W."/>
            <person name="Sun Y."/>
            <person name="Zhang Z."/>
            <person name="Bao J."/>
            <person name="Han Y."/>
            <person name="Dong L."/>
            <person name="Ji J."/>
            <person name="Chen P."/>
            <person name="Wu S."/>
            <person name="Liu J."/>
            <person name="Xiao Y."/>
            <person name="Bu D."/>
            <person name="Tan J."/>
            <person name="Yang L."/>
            <person name="Ye C."/>
            <person name="Zhang J."/>
            <person name="Xu J."/>
            <person name="Zhou Y."/>
            <person name="Yu Y."/>
            <person name="Zhang B."/>
            <person name="Zhuang S."/>
            <person name="Wei H."/>
            <person name="Liu B."/>
            <person name="Lei M."/>
            <person name="Yu H."/>
            <person name="Li Y."/>
            <person name="Xu H."/>
            <person name="Wei S."/>
            <person name="He X."/>
            <person name="Fang L."/>
            <person name="Zhang Z."/>
            <person name="Zhang Y."/>
            <person name="Huang X."/>
            <person name="Su Z."/>
            <person name="Tong W."/>
            <person name="Li J."/>
            <person name="Tong Z."/>
            <person name="Li S."/>
            <person name="Ye J."/>
            <person name="Wang L."/>
            <person name="Fang L."/>
            <person name="Lei T."/>
            <person name="Chen C.-S."/>
            <person name="Chen H.-C."/>
            <person name="Xu Z."/>
            <person name="Li H."/>
            <person name="Huang H."/>
            <person name="Zhang F."/>
            <person name="Xu H."/>
            <person name="Li N."/>
            <person name="Zhao C."/>
            <person name="Li S."/>
            <person name="Dong L."/>
            <person name="Huang Y."/>
            <person name="Li L."/>
            <person name="Xi Y."/>
            <person name="Qi Q."/>
            <person name="Li W."/>
            <person name="Zhang B."/>
            <person name="Hu W."/>
            <person name="Zhang Y."/>
            <person name="Tian X."/>
            <person name="Jiao Y."/>
            <person name="Liang X."/>
            <person name="Jin J."/>
            <person name="Gao L."/>
            <person name="Zheng W."/>
            <person name="Hao B."/>
            <person name="Liu S.-M."/>
            <person name="Wang W."/>
            <person name="Yuan L."/>
            <person name="Cao M."/>
            <person name="McDermott J."/>
            <person name="Samudrala R."/>
            <person name="Wang J."/>
            <person name="Wong G.K.-S."/>
            <person name="Yang H."/>
        </authorList>
    </citation>
    <scope>NUCLEOTIDE SEQUENCE [LARGE SCALE GENOMIC DNA]</scope>
    <source>
        <strain>cv. Nipponbare</strain>
    </source>
</reference>
<reference key="6">
    <citation type="journal article" date="2008" name="Mol. Plant Microbe Interact.">
        <title>OsRAR1 and OsSGT1 physically interact and function in rice basal disease resistance.</title>
        <authorList>
            <person name="Wang Y."/>
            <person name="Gao M."/>
            <person name="Li Q."/>
            <person name="Wang L."/>
            <person name="Wang J."/>
            <person name="Jeon J.S."/>
            <person name="Qu N."/>
            <person name="Zhang Y."/>
            <person name="He Z."/>
        </authorList>
    </citation>
    <scope>FUNCTION</scope>
    <scope>INTERACTION WITH RAR1</scope>
    <scope>SUBCELLULAR LOCATION</scope>
</reference>
<reference key="7">
    <citation type="journal article" date="2004" name="Biochem. Biophys. Res. Commun.">
        <title>Characterization of Rad6 from a higher plant, rice (Oryza sativa L.) and its interaction with Sgt1, a subunit of the SCF ubiquitin ligase complex.</title>
        <authorList>
            <person name="Yamamoto T."/>
            <person name="Mori Y."/>
            <person name="Ishibashi T."/>
            <person name="Uchiyama Y."/>
            <person name="Sakaguchi N."/>
            <person name="Furukawa T."/>
            <person name="Hashimoto J."/>
            <person name="Kimura S."/>
            <person name="Sakaguchi K."/>
        </authorList>
    </citation>
    <scope>INTERACTION WITH RAD6</scope>
    <scope>TISSUE SPECIFICITY</scope>
    <scope>INDUCTION BY HYDROGEN PEROXIDE</scope>
</reference>
<comment type="function">
    <text evidence="6">Involved in basal disease resistance to bacterial blight (X.oryzae). May act as positive regulator of basal defense. Probably required for SCF-mediated ubiquitination, by coupling HSP90 to SCF complex for ubiquitination of HSP90 client proteins.</text>
</comment>
<comment type="subunit">
    <text evidence="5 6">Interacts (via CS domain) with RAR1 (via CHORD 2 domain). Interacts with RAD6.</text>
</comment>
<comment type="subcellular location">
    <subcellularLocation>
        <location evidence="6">Cytoplasm</location>
    </subcellularLocation>
    <subcellularLocation>
        <location evidence="6">Nucleus</location>
    </subcellularLocation>
</comment>
<comment type="tissue specificity">
    <text evidence="5">Expressed in roots, root tips, shoot apical meristem (SAM), young leaves, flag leaves and ears.</text>
</comment>
<comment type="induction">
    <text evidence="5">By hydrogen peroxide.</text>
</comment>
<comment type="similarity">
    <text evidence="9">Belongs to the SGT1 family.</text>
</comment>
<protein>
    <recommendedName>
        <fullName evidence="1">Protein SGT1 homolog</fullName>
        <shortName evidence="8">OsSGT1</shortName>
    </recommendedName>
    <alternativeName>
        <fullName evidence="1">Suppressor of G2 allele of SKP1 homolog</fullName>
    </alternativeName>
</protein>
<name>SGT1_ORYSJ</name>
<keyword id="KW-0963">Cytoplasm</keyword>
<keyword id="KW-0539">Nucleus</keyword>
<keyword id="KW-0611">Plant defense</keyword>
<keyword id="KW-1185">Reference proteome</keyword>
<keyword id="KW-0677">Repeat</keyword>
<keyword id="KW-0802">TPR repeat</keyword>
<keyword id="KW-0833">Ubl conjugation pathway</keyword>
<dbReference type="EMBL" id="AF192467">
    <property type="protein sequence ID" value="AAF18438.1"/>
    <property type="molecule type" value="mRNA"/>
</dbReference>
<dbReference type="EMBL" id="AP008207">
    <property type="protein sequence ID" value="BAF05534.1"/>
    <property type="molecule type" value="Genomic_DNA"/>
</dbReference>
<dbReference type="EMBL" id="AP014957">
    <property type="status" value="NOT_ANNOTATED_CDS"/>
    <property type="molecule type" value="Genomic_DNA"/>
</dbReference>
<dbReference type="EMBL" id="CM000138">
    <property type="protein sequence ID" value="EEE55012.1"/>
    <property type="molecule type" value="Genomic_DNA"/>
</dbReference>
<dbReference type="RefSeq" id="XP_015621707.1">
    <property type="nucleotide sequence ID" value="XM_015766221.1"/>
</dbReference>
<dbReference type="SMR" id="Q0JL44"/>
<dbReference type="FunCoup" id="Q0JL44">
    <property type="interactions" value="2683"/>
</dbReference>
<dbReference type="IntAct" id="Q0JL44">
    <property type="interactions" value="9"/>
</dbReference>
<dbReference type="STRING" id="39947.Q0JL44"/>
<dbReference type="PaxDb" id="39947-Q0JL44"/>
<dbReference type="EnsemblPlants" id="Os01t0624500-01">
    <property type="protein sequence ID" value="Os01t0624500-01"/>
    <property type="gene ID" value="Os01g0624500"/>
</dbReference>
<dbReference type="Gramene" id="Os01t0624500-01">
    <property type="protein sequence ID" value="Os01t0624500-01"/>
    <property type="gene ID" value="Os01g0624500"/>
</dbReference>
<dbReference type="KEGG" id="dosa:Os01g0624500"/>
<dbReference type="eggNOG" id="KOG1309">
    <property type="taxonomic scope" value="Eukaryota"/>
</dbReference>
<dbReference type="HOGENOM" id="CLU_039532_2_1_1"/>
<dbReference type="InParanoid" id="Q0JL44"/>
<dbReference type="OrthoDB" id="1898560at2759"/>
<dbReference type="Proteomes" id="UP000000763">
    <property type="component" value="Chromosome 1"/>
</dbReference>
<dbReference type="Proteomes" id="UP000007752">
    <property type="component" value="Chromosome 1"/>
</dbReference>
<dbReference type="Proteomes" id="UP000059680">
    <property type="component" value="Chromosome 1"/>
</dbReference>
<dbReference type="GO" id="GO:0005737">
    <property type="term" value="C:cytoplasm"/>
    <property type="evidence" value="ECO:0000314"/>
    <property type="project" value="UniProtKB"/>
</dbReference>
<dbReference type="GO" id="GO:0005634">
    <property type="term" value="C:nucleus"/>
    <property type="evidence" value="ECO:0000314"/>
    <property type="project" value="UniProtKB"/>
</dbReference>
<dbReference type="GO" id="GO:0051087">
    <property type="term" value="F:protein-folding chaperone binding"/>
    <property type="evidence" value="ECO:0007669"/>
    <property type="project" value="InterPro"/>
</dbReference>
<dbReference type="GO" id="GO:0042742">
    <property type="term" value="P:defense response to bacterium"/>
    <property type="evidence" value="ECO:0000315"/>
    <property type="project" value="UniProtKB"/>
</dbReference>
<dbReference type="GO" id="GO:0050832">
    <property type="term" value="P:defense response to fungus"/>
    <property type="evidence" value="ECO:0000315"/>
    <property type="project" value="UniProtKB"/>
</dbReference>
<dbReference type="CDD" id="cd06466">
    <property type="entry name" value="p23_CS_SGT1_like"/>
    <property type="match status" value="1"/>
</dbReference>
<dbReference type="FunFam" id="1.25.40.10:FF:000259">
    <property type="entry name" value="Protein SGT1 homolog"/>
    <property type="match status" value="1"/>
</dbReference>
<dbReference type="FunFam" id="2.60.40.790:FF:000041">
    <property type="entry name" value="Protein SGT1 homolog A"/>
    <property type="match status" value="1"/>
</dbReference>
<dbReference type="Gene3D" id="2.60.40.790">
    <property type="match status" value="1"/>
</dbReference>
<dbReference type="Gene3D" id="1.25.40.10">
    <property type="entry name" value="Tetratricopeptide repeat domain"/>
    <property type="match status" value="1"/>
</dbReference>
<dbReference type="InterPro" id="IPR007052">
    <property type="entry name" value="CS_dom"/>
</dbReference>
<dbReference type="InterPro" id="IPR008978">
    <property type="entry name" value="HSP20-like_chaperone"/>
</dbReference>
<dbReference type="InterPro" id="IPR007699">
    <property type="entry name" value="SGS_dom"/>
</dbReference>
<dbReference type="InterPro" id="IPR044563">
    <property type="entry name" value="Sgt1-like"/>
</dbReference>
<dbReference type="InterPro" id="IPR011990">
    <property type="entry name" value="TPR-like_helical_dom_sf"/>
</dbReference>
<dbReference type="InterPro" id="IPR019734">
    <property type="entry name" value="TPR_rpt"/>
</dbReference>
<dbReference type="PANTHER" id="PTHR45862">
    <property type="entry name" value="PROTEIN SGT1 HOMOLOG"/>
    <property type="match status" value="1"/>
</dbReference>
<dbReference type="Pfam" id="PF04969">
    <property type="entry name" value="CS"/>
    <property type="match status" value="1"/>
</dbReference>
<dbReference type="Pfam" id="PF05002">
    <property type="entry name" value="SGS"/>
    <property type="match status" value="1"/>
</dbReference>
<dbReference type="Pfam" id="PF13432">
    <property type="entry name" value="TPR_16"/>
    <property type="match status" value="1"/>
</dbReference>
<dbReference type="SMART" id="SM00028">
    <property type="entry name" value="TPR"/>
    <property type="match status" value="3"/>
</dbReference>
<dbReference type="SUPFAM" id="SSF49764">
    <property type="entry name" value="HSP20-like chaperones"/>
    <property type="match status" value="1"/>
</dbReference>
<dbReference type="SUPFAM" id="SSF48452">
    <property type="entry name" value="TPR-like"/>
    <property type="match status" value="1"/>
</dbReference>
<dbReference type="PROSITE" id="PS51203">
    <property type="entry name" value="CS"/>
    <property type="match status" value="1"/>
</dbReference>
<dbReference type="PROSITE" id="PS51048">
    <property type="entry name" value="SGS"/>
    <property type="match status" value="1"/>
</dbReference>
<dbReference type="PROSITE" id="PS50005">
    <property type="entry name" value="TPR"/>
    <property type="match status" value="2"/>
</dbReference>
<dbReference type="PROSITE" id="PS50293">
    <property type="entry name" value="TPR_REGION"/>
    <property type="match status" value="1"/>
</dbReference>
<evidence type="ECO:0000250" key="1">
    <source>
        <dbReference type="UniProtKB" id="Q08446"/>
    </source>
</evidence>
<evidence type="ECO:0000255" key="2">
    <source>
        <dbReference type="PROSITE-ProRule" id="PRU00386"/>
    </source>
</evidence>
<evidence type="ECO:0000255" key="3">
    <source>
        <dbReference type="PROSITE-ProRule" id="PRU00547"/>
    </source>
</evidence>
<evidence type="ECO:0000256" key="4">
    <source>
        <dbReference type="SAM" id="MobiDB-lite"/>
    </source>
</evidence>
<evidence type="ECO:0000269" key="5">
    <source>
    </source>
</evidence>
<evidence type="ECO:0000269" key="6">
    <source>
    </source>
</evidence>
<evidence type="ECO:0000303" key="7">
    <source>
    </source>
</evidence>
<evidence type="ECO:0000303" key="8">
    <source>
    </source>
</evidence>
<evidence type="ECO:0000305" key="9"/>
<organism>
    <name type="scientific">Oryza sativa subsp. japonica</name>
    <name type="common">Rice</name>
    <dbReference type="NCBI Taxonomy" id="39947"/>
    <lineage>
        <taxon>Eukaryota</taxon>
        <taxon>Viridiplantae</taxon>
        <taxon>Streptophyta</taxon>
        <taxon>Embryophyta</taxon>
        <taxon>Tracheophyta</taxon>
        <taxon>Spermatophyta</taxon>
        <taxon>Magnoliopsida</taxon>
        <taxon>Liliopsida</taxon>
        <taxon>Poales</taxon>
        <taxon>Poaceae</taxon>
        <taxon>BOP clade</taxon>
        <taxon>Oryzoideae</taxon>
        <taxon>Oryzeae</taxon>
        <taxon>Oryzinae</taxon>
        <taxon>Oryza</taxon>
        <taxon>Oryza sativa</taxon>
    </lineage>
</organism>
<gene>
    <name evidence="7" type="primary">SGT1</name>
    <name type="ordered locus">Os01g0624500</name>
    <name type="ordered locus">LOC_Os01g43540</name>
    <name type="ORF">OsJ_02663</name>
</gene>